<organism>
    <name type="scientific">Escherichia coli O139:H28 (strain E24377A / ETEC)</name>
    <dbReference type="NCBI Taxonomy" id="331111"/>
    <lineage>
        <taxon>Bacteria</taxon>
        <taxon>Pseudomonadati</taxon>
        <taxon>Pseudomonadota</taxon>
        <taxon>Gammaproteobacteria</taxon>
        <taxon>Enterobacterales</taxon>
        <taxon>Enterobacteriaceae</taxon>
        <taxon>Escherichia</taxon>
    </lineage>
</organism>
<feature type="chain" id="PRO_0000323568" description="Protease ElaD">
    <location>
        <begin position="1"/>
        <end position="406"/>
    </location>
</feature>
<feature type="active site" evidence="1">
    <location>
        <position position="234"/>
    </location>
</feature>
<feature type="active site" description="Nucleophile" evidence="1">
    <location>
        <position position="316"/>
    </location>
</feature>
<gene>
    <name type="primary">elaD</name>
    <name type="ordered locus">EcE24377A_2566</name>
</gene>
<reference key="1">
    <citation type="journal article" date="2008" name="J. Bacteriol.">
        <title>The pangenome structure of Escherichia coli: comparative genomic analysis of E. coli commensal and pathogenic isolates.</title>
        <authorList>
            <person name="Rasko D.A."/>
            <person name="Rosovitz M.J."/>
            <person name="Myers G.S.A."/>
            <person name="Mongodin E.F."/>
            <person name="Fricke W.F."/>
            <person name="Gajer P."/>
            <person name="Crabtree J."/>
            <person name="Sebaihia M."/>
            <person name="Thomson N.R."/>
            <person name="Chaudhuri R."/>
            <person name="Henderson I.R."/>
            <person name="Sperandio V."/>
            <person name="Ravel J."/>
        </authorList>
    </citation>
    <scope>NUCLEOTIDE SEQUENCE [LARGE SCALE GENOMIC DNA]</scope>
    <source>
        <strain>E24377A / ETEC</strain>
    </source>
</reference>
<keyword id="KW-0378">Hydrolase</keyword>
<keyword id="KW-0645">Protease</keyword>
<keyword id="KW-1185">Reference proteome</keyword>
<keyword id="KW-0788">Thiol protease</keyword>
<evidence type="ECO:0000250" key="1"/>
<evidence type="ECO:0000305" key="2"/>
<protein>
    <recommendedName>
        <fullName>Protease ElaD</fullName>
        <ecNumber>3.4.22.-</ecNumber>
    </recommendedName>
    <alternativeName>
        <fullName>Deubiquitinase</fullName>
    </alternativeName>
    <alternativeName>
        <fullName>Deubiquitinating enzyme</fullName>
        <shortName>DUB</shortName>
    </alternativeName>
    <alternativeName>
        <fullName>Deubiquitinating protease</fullName>
    </alternativeName>
</protein>
<accession>A7ZP88</accession>
<name>ELAD_ECO24</name>
<comment type="function">
    <text evidence="1">Protease that can act as an efficient and specific deubiquitinating enzyme in vitro. Does not possess desumoylating and deneddylating activities. The physiological substrate is unknown (By similarity).</text>
</comment>
<comment type="similarity">
    <text evidence="2">Belongs to the peptidase C79 family.</text>
</comment>
<comment type="sequence caution" evidence="2">
    <conflict type="erroneous initiation">
        <sequence resource="EMBL-CDS" id="ABV20865"/>
    </conflict>
</comment>
<proteinExistence type="inferred from homology"/>
<sequence length="406" mass="46290">MMVTVVSNYCQLSQKQLSQTFAEKFTVTEELLQSLKKTALSGDEESIELLHNIALGYDKFGKEAEDILYHIVRNPTNETLSIIRLIKNACLKLYNLAHTATNFPLKPTGPDNSDVLLFKKLFSPSKLMTIIGDEIPLISEKQSLSKVLLNDENNELSDGTNFWDKNRQLTTDEIDCYLQKIAANAKNTEVNYPTGLYVPYSTRTHLEDALNENIKSDPSWPKAVQLFPINTGGHWILVSLQKIVNEKNNTQQIKCVIFNSLRALGHDKENSLKRVINSFNSEFMGEMSNNNIKVHLTEPEIIFLHADLQQYLSQSCGAFVCMAAQEVIEQRESNSDSAPYTLLKNYADRFKKYSAEEQYEIDFQHRLVNRNCYLDKYGDARINASYTQLEIKHSQPKNRASGKRVS</sequence>
<dbReference type="EC" id="3.4.22.-"/>
<dbReference type="EMBL" id="CP000800">
    <property type="protein sequence ID" value="ABV20865.1"/>
    <property type="status" value="ALT_INIT"/>
    <property type="molecule type" value="Genomic_DNA"/>
</dbReference>
<dbReference type="RefSeq" id="WP_001307307.1">
    <property type="nucleotide sequence ID" value="NC_009801.1"/>
</dbReference>
<dbReference type="SMR" id="A7ZP88"/>
<dbReference type="MEROPS" id="C79.001"/>
<dbReference type="KEGG" id="ecw:EcE24377A_2566"/>
<dbReference type="HOGENOM" id="CLU_069513_0_0_6"/>
<dbReference type="Proteomes" id="UP000001122">
    <property type="component" value="Chromosome"/>
</dbReference>
<dbReference type="GO" id="GO:0008234">
    <property type="term" value="F:cysteine-type peptidase activity"/>
    <property type="evidence" value="ECO:0007669"/>
    <property type="project" value="UniProtKB-KW"/>
</dbReference>
<dbReference type="GO" id="GO:0006508">
    <property type="term" value="P:proteolysis"/>
    <property type="evidence" value="ECO:0007669"/>
    <property type="project" value="UniProtKB-KW"/>
</dbReference>
<dbReference type="FunFam" id="3.40.395.10:FF:000015">
    <property type="entry name" value="Protease ElaD"/>
    <property type="match status" value="1"/>
</dbReference>
<dbReference type="Gene3D" id="3.40.395.10">
    <property type="entry name" value="Adenoviral Proteinase, Chain A"/>
    <property type="match status" value="1"/>
</dbReference>
<dbReference type="InterPro" id="IPR054329">
    <property type="entry name" value="ElaD/SseL-like_N"/>
</dbReference>
<dbReference type="InterPro" id="IPR038765">
    <property type="entry name" value="Papain-like_cys_pep_sf"/>
</dbReference>
<dbReference type="InterPro" id="IPR003653">
    <property type="entry name" value="Peptidase_C48_C"/>
</dbReference>
<dbReference type="NCBIfam" id="NF008812">
    <property type="entry name" value="PRK11836.1"/>
    <property type="match status" value="1"/>
</dbReference>
<dbReference type="Pfam" id="PF22103">
    <property type="entry name" value="ElaD_SseL-like_N"/>
    <property type="match status" value="1"/>
</dbReference>
<dbReference type="Pfam" id="PF02902">
    <property type="entry name" value="Peptidase_C48"/>
    <property type="match status" value="1"/>
</dbReference>
<dbReference type="SUPFAM" id="SSF54001">
    <property type="entry name" value="Cysteine proteinases"/>
    <property type="match status" value="1"/>
</dbReference>